<organism>
    <name type="scientific">Xenopus tropicalis</name>
    <name type="common">Western clawed frog</name>
    <name type="synonym">Silurana tropicalis</name>
    <dbReference type="NCBI Taxonomy" id="8364"/>
    <lineage>
        <taxon>Eukaryota</taxon>
        <taxon>Metazoa</taxon>
        <taxon>Chordata</taxon>
        <taxon>Craniata</taxon>
        <taxon>Vertebrata</taxon>
        <taxon>Euteleostomi</taxon>
        <taxon>Amphibia</taxon>
        <taxon>Batrachia</taxon>
        <taxon>Anura</taxon>
        <taxon>Pipoidea</taxon>
        <taxon>Pipidae</taxon>
        <taxon>Xenopodinae</taxon>
        <taxon>Xenopus</taxon>
        <taxon>Silurana</taxon>
    </lineage>
</organism>
<keyword id="KW-0539">Nucleus</keyword>
<keyword id="KW-1185">Reference proteome</keyword>
<gene>
    <name evidence="3" type="primary">akirin1</name>
    <name type="ORF">TGas103l22.1</name>
</gene>
<comment type="function">
    <text evidence="2">Molecular adapter that acts as a bridge between proteins, and which is involved skeletal muscle development. Functions as a signal transducer for MSTN during skeletal muscle regeneration and myogenesis.</text>
</comment>
<comment type="subcellular location">
    <subcellularLocation>
        <location evidence="3">Nucleus</location>
    </subcellularLocation>
</comment>
<comment type="similarity">
    <text evidence="5">Belongs to the akirin family.</text>
</comment>
<evidence type="ECO:0000250" key="1">
    <source>
        <dbReference type="UniProtKB" id="Q53H80"/>
    </source>
</evidence>
<evidence type="ECO:0000250" key="2">
    <source>
        <dbReference type="UniProtKB" id="Q99LF1"/>
    </source>
</evidence>
<evidence type="ECO:0000250" key="3">
    <source>
        <dbReference type="UniProtKB" id="Q9H9L7"/>
    </source>
</evidence>
<evidence type="ECO:0000256" key="4">
    <source>
        <dbReference type="SAM" id="MobiDB-lite"/>
    </source>
</evidence>
<evidence type="ECO:0000305" key="5"/>
<reference key="1">
    <citation type="submission" date="2006-10" db="EMBL/GenBank/DDBJ databases">
        <authorList>
            <consortium name="Sanger Xenopus tropicalis EST/cDNA project"/>
        </authorList>
    </citation>
    <scope>NUCLEOTIDE SEQUENCE [LARGE SCALE MRNA]</scope>
    <source>
        <tissue>Gastrula</tissue>
    </source>
</reference>
<reference key="2">
    <citation type="submission" date="2005-02" db="EMBL/GenBank/DDBJ databases">
        <authorList>
            <consortium name="NIH - Xenopus Gene Collection (XGC) project"/>
        </authorList>
    </citation>
    <scope>NUCLEOTIDE SEQUENCE [LARGE SCALE MRNA]</scope>
    <source>
        <tissue>Tail bud</tissue>
    </source>
</reference>
<dbReference type="EMBL" id="CR762217">
    <property type="protein sequence ID" value="CAJ81547.1"/>
    <property type="molecule type" value="mRNA"/>
</dbReference>
<dbReference type="EMBL" id="BC090594">
    <property type="protein sequence ID" value="AAH90594.1"/>
    <property type="molecule type" value="mRNA"/>
</dbReference>
<dbReference type="RefSeq" id="NP_001016080.1">
    <property type="nucleotide sequence ID" value="NM_001016080.2"/>
</dbReference>
<dbReference type="SMR" id="Q5BL57"/>
<dbReference type="FunCoup" id="Q5BL57">
    <property type="interactions" value="4298"/>
</dbReference>
<dbReference type="STRING" id="8364.ENSXETP00000011790"/>
<dbReference type="PaxDb" id="8364-ENSXETP00000058585"/>
<dbReference type="DNASU" id="548834"/>
<dbReference type="GeneID" id="548834"/>
<dbReference type="KEGG" id="xtr:548834"/>
<dbReference type="AGR" id="Xenbase:XB-GENE-5820002"/>
<dbReference type="CTD" id="79647"/>
<dbReference type="Xenbase" id="XB-GENE-5820002">
    <property type="gene designation" value="akirin1"/>
</dbReference>
<dbReference type="eggNOG" id="KOG4330">
    <property type="taxonomic scope" value="Eukaryota"/>
</dbReference>
<dbReference type="HOGENOM" id="CLU_119227_0_0_1"/>
<dbReference type="InParanoid" id="Q5BL57"/>
<dbReference type="OrthoDB" id="10039914at2759"/>
<dbReference type="TreeFam" id="TF317123"/>
<dbReference type="Proteomes" id="UP000008143">
    <property type="component" value="Chromosome 2"/>
</dbReference>
<dbReference type="Bgee" id="ENSXETG00000005271">
    <property type="expression patterns" value="Expressed in 4-cell stage embryo and 13 other cell types or tissues"/>
</dbReference>
<dbReference type="GO" id="GO:0005634">
    <property type="term" value="C:nucleus"/>
    <property type="evidence" value="ECO:0000250"/>
    <property type="project" value="UniProtKB"/>
</dbReference>
<dbReference type="GO" id="GO:0045663">
    <property type="term" value="P:positive regulation of myoblast differentiation"/>
    <property type="evidence" value="ECO:0000250"/>
    <property type="project" value="UniProtKB"/>
</dbReference>
<dbReference type="GO" id="GO:0045944">
    <property type="term" value="P:positive regulation of transcription by RNA polymerase II"/>
    <property type="evidence" value="ECO:0000250"/>
    <property type="project" value="UniProtKB"/>
</dbReference>
<dbReference type="CDD" id="cd22243">
    <property type="entry name" value="akirin-1"/>
    <property type="match status" value="1"/>
</dbReference>
<dbReference type="InterPro" id="IPR024132">
    <property type="entry name" value="Akirin"/>
</dbReference>
<dbReference type="PANTHER" id="PTHR13293:SF9">
    <property type="entry name" value="AKIRIN-1"/>
    <property type="match status" value="1"/>
</dbReference>
<dbReference type="PANTHER" id="PTHR13293">
    <property type="entry name" value="AKIRIN-RELATED"/>
    <property type="match status" value="1"/>
</dbReference>
<sequence>MACGATLKRSMEFEALMSPQSPKRRRCAPLPGSPATPSPQRCGIRPEMQQGQQQPLPQLGGDRRLTPEQILQNIKQEYTRYQRRRQLEGAFNQSEAGVSNEVQASCSSLTAPSSPGSLVKKDQPTFSLRQVGILCERLLKDHEDKIREEYEQILNIKLAEQYESFVKFTHDQIMRRYGARPASYVS</sequence>
<name>AKIR1_XENTR</name>
<proteinExistence type="evidence at transcript level"/>
<protein>
    <recommendedName>
        <fullName evidence="3">Akirin-1</fullName>
    </recommendedName>
</protein>
<feature type="chain" id="PRO_0000274322" description="Akirin-1">
    <location>
        <begin position="1"/>
        <end position="186"/>
    </location>
</feature>
<feature type="region of interest" description="Disordered" evidence="4">
    <location>
        <begin position="1"/>
        <end position="64"/>
    </location>
</feature>
<feature type="short sequence motif" description="Nuclear localization signal">
    <location>
        <begin position="22"/>
        <end position="27"/>
    </location>
</feature>
<feature type="short sequence motif" description="SYVS motif" evidence="1">
    <location>
        <begin position="183"/>
        <end position="186"/>
    </location>
</feature>
<feature type="compositionally biased region" description="Low complexity" evidence="4">
    <location>
        <begin position="49"/>
        <end position="60"/>
    </location>
</feature>
<feature type="sequence conflict" description="In Ref. 1; CAJ81547." evidence="5" ref="1">
    <original>P</original>
    <variation>L</variation>
    <location>
        <position position="57"/>
    </location>
</feature>
<accession>Q5BL57</accession>
<accession>Q28F20</accession>